<organism>
    <name type="scientific">Escherichia coli O6:K15:H31 (strain 536 / UPEC)</name>
    <dbReference type="NCBI Taxonomy" id="362663"/>
    <lineage>
        <taxon>Bacteria</taxon>
        <taxon>Pseudomonadati</taxon>
        <taxon>Pseudomonadota</taxon>
        <taxon>Gammaproteobacteria</taxon>
        <taxon>Enterobacterales</taxon>
        <taxon>Enterobacteriaceae</taxon>
        <taxon>Escherichia</taxon>
    </lineage>
</organism>
<keyword id="KW-0067">ATP-binding</keyword>
<keyword id="KW-0460">Magnesium</keyword>
<keyword id="KW-0547">Nucleotide-binding</keyword>
<keyword id="KW-0808">Transferase</keyword>
<keyword id="KW-0819">tRNA processing</keyword>
<comment type="function">
    <text evidence="1">Catalyzes the transfer of a dimethylallyl group onto the adenine at position 37 in tRNAs that read codons beginning with uridine, leading to the formation of N6-(dimethylallyl)adenosine (i(6)A).</text>
</comment>
<comment type="catalytic activity">
    <reaction evidence="1">
        <text>adenosine(37) in tRNA + dimethylallyl diphosphate = N(6)-dimethylallyladenosine(37) in tRNA + diphosphate</text>
        <dbReference type="Rhea" id="RHEA:26482"/>
        <dbReference type="Rhea" id="RHEA-COMP:10162"/>
        <dbReference type="Rhea" id="RHEA-COMP:10375"/>
        <dbReference type="ChEBI" id="CHEBI:33019"/>
        <dbReference type="ChEBI" id="CHEBI:57623"/>
        <dbReference type="ChEBI" id="CHEBI:74411"/>
        <dbReference type="ChEBI" id="CHEBI:74415"/>
        <dbReference type="EC" id="2.5.1.75"/>
    </reaction>
</comment>
<comment type="cofactor">
    <cofactor evidence="1">
        <name>Mg(2+)</name>
        <dbReference type="ChEBI" id="CHEBI:18420"/>
    </cofactor>
</comment>
<comment type="subunit">
    <text evidence="1">Monomer.</text>
</comment>
<comment type="similarity">
    <text evidence="1">Belongs to the IPP transferase family.</text>
</comment>
<name>MIAA_ECOL5</name>
<accession>Q0T9M2</accession>
<sequence>MSDISKASLPKAIFLMGPTASGKTALAIELRKILPVELISVDSALIYKGMDIGTAKPNAEELLAAPHRLLNIRDPSQAYSAADFRRDALAEMADITAAGRIPLLVGGTMLYFKALLEGLSPLPSADPEVRARIEQQAAEQGWESLHRQLQEIDPVAAARIHPNDPQRLSRALEVFFISGKTLPELTQTSGDALPYQVHQFAIAPASRELLHQRIEQRFHQMLASGFEAEVRALFARGDLHTDLPSIRCVGYRQMWSYLEGEISYDEMVYRGVCATRQLAKRQITWLRGWEGVHWLDSEKPEQARDEVLQVVGAIAG</sequence>
<gene>
    <name evidence="1" type="primary">miaA</name>
    <name type="ordered locus">ECP_4416</name>
</gene>
<proteinExistence type="inferred from homology"/>
<feature type="chain" id="PRO_1000020595" description="tRNA dimethylallyltransferase">
    <location>
        <begin position="1"/>
        <end position="316"/>
    </location>
</feature>
<feature type="region of interest" description="Interaction with substrate tRNA" evidence="1">
    <location>
        <begin position="42"/>
        <end position="45"/>
    </location>
</feature>
<feature type="region of interest" description="Interaction with substrate tRNA" evidence="1">
    <location>
        <begin position="166"/>
        <end position="170"/>
    </location>
</feature>
<feature type="region of interest" description="Interaction with substrate tRNA" evidence="1">
    <location>
        <begin position="247"/>
        <end position="252"/>
    </location>
</feature>
<feature type="region of interest" description="Interaction with substrate tRNA" evidence="1">
    <location>
        <begin position="280"/>
        <end position="287"/>
    </location>
</feature>
<feature type="binding site" evidence="1">
    <location>
        <begin position="17"/>
        <end position="24"/>
    </location>
    <ligand>
        <name>ATP</name>
        <dbReference type="ChEBI" id="CHEBI:30616"/>
    </ligand>
</feature>
<feature type="binding site" evidence="1">
    <location>
        <begin position="19"/>
        <end position="24"/>
    </location>
    <ligand>
        <name>substrate</name>
    </ligand>
</feature>
<feature type="site" description="Interaction with substrate tRNA" evidence="1">
    <location>
        <position position="108"/>
    </location>
</feature>
<feature type="site" description="Interaction with substrate tRNA" evidence="1">
    <location>
        <position position="130"/>
    </location>
</feature>
<protein>
    <recommendedName>
        <fullName evidence="1">tRNA dimethylallyltransferase</fullName>
        <ecNumber evidence="1">2.5.1.75</ecNumber>
    </recommendedName>
    <alternativeName>
        <fullName evidence="1">Dimethylallyl diphosphate:tRNA dimethylallyltransferase</fullName>
        <shortName evidence="1">DMAPP:tRNA dimethylallyltransferase</shortName>
        <shortName evidence="1">DMATase</shortName>
    </alternativeName>
    <alternativeName>
        <fullName evidence="1">Isopentenyl-diphosphate:tRNA isopentenyltransferase</fullName>
        <shortName evidence="1">IPP transferase</shortName>
        <shortName evidence="1">IPPT</shortName>
        <shortName evidence="1">IPTase</shortName>
    </alternativeName>
</protein>
<reference key="1">
    <citation type="journal article" date="2006" name="Mol. Microbiol.">
        <title>Role of pathogenicity island-associated integrases in the genome plasticity of uropathogenic Escherichia coli strain 536.</title>
        <authorList>
            <person name="Hochhut B."/>
            <person name="Wilde C."/>
            <person name="Balling G."/>
            <person name="Middendorf B."/>
            <person name="Dobrindt U."/>
            <person name="Brzuszkiewicz E."/>
            <person name="Gottschalk G."/>
            <person name="Carniel E."/>
            <person name="Hacker J."/>
        </authorList>
    </citation>
    <scope>NUCLEOTIDE SEQUENCE [LARGE SCALE GENOMIC DNA]</scope>
    <source>
        <strain>536 / UPEC</strain>
    </source>
</reference>
<dbReference type="EC" id="2.5.1.75" evidence="1"/>
<dbReference type="EMBL" id="CP000247">
    <property type="protein sequence ID" value="ABG72357.1"/>
    <property type="molecule type" value="Genomic_DNA"/>
</dbReference>
<dbReference type="RefSeq" id="WP_001280355.1">
    <property type="nucleotide sequence ID" value="NC_008253.1"/>
</dbReference>
<dbReference type="SMR" id="Q0T9M2"/>
<dbReference type="KEGG" id="ecp:ECP_4416"/>
<dbReference type="HOGENOM" id="CLU_032616_0_0_6"/>
<dbReference type="Proteomes" id="UP000009182">
    <property type="component" value="Chromosome"/>
</dbReference>
<dbReference type="GO" id="GO:0005524">
    <property type="term" value="F:ATP binding"/>
    <property type="evidence" value="ECO:0007669"/>
    <property type="project" value="UniProtKB-UniRule"/>
</dbReference>
<dbReference type="GO" id="GO:0052381">
    <property type="term" value="F:tRNA dimethylallyltransferase activity"/>
    <property type="evidence" value="ECO:0007669"/>
    <property type="project" value="UniProtKB-UniRule"/>
</dbReference>
<dbReference type="GO" id="GO:0006400">
    <property type="term" value="P:tRNA modification"/>
    <property type="evidence" value="ECO:0007669"/>
    <property type="project" value="TreeGrafter"/>
</dbReference>
<dbReference type="FunFam" id="1.10.20.140:FF:000001">
    <property type="entry name" value="tRNA dimethylallyltransferase"/>
    <property type="match status" value="1"/>
</dbReference>
<dbReference type="Gene3D" id="1.10.20.140">
    <property type="match status" value="1"/>
</dbReference>
<dbReference type="Gene3D" id="3.40.50.300">
    <property type="entry name" value="P-loop containing nucleotide triphosphate hydrolases"/>
    <property type="match status" value="1"/>
</dbReference>
<dbReference type="HAMAP" id="MF_00185">
    <property type="entry name" value="IPP_trans"/>
    <property type="match status" value="1"/>
</dbReference>
<dbReference type="InterPro" id="IPR039657">
    <property type="entry name" value="Dimethylallyltransferase"/>
</dbReference>
<dbReference type="InterPro" id="IPR018022">
    <property type="entry name" value="IPT"/>
</dbReference>
<dbReference type="InterPro" id="IPR027417">
    <property type="entry name" value="P-loop_NTPase"/>
</dbReference>
<dbReference type="NCBIfam" id="TIGR00174">
    <property type="entry name" value="miaA"/>
    <property type="match status" value="1"/>
</dbReference>
<dbReference type="PANTHER" id="PTHR11088">
    <property type="entry name" value="TRNA DIMETHYLALLYLTRANSFERASE"/>
    <property type="match status" value="1"/>
</dbReference>
<dbReference type="PANTHER" id="PTHR11088:SF60">
    <property type="entry name" value="TRNA DIMETHYLALLYLTRANSFERASE"/>
    <property type="match status" value="1"/>
</dbReference>
<dbReference type="Pfam" id="PF01715">
    <property type="entry name" value="IPPT"/>
    <property type="match status" value="1"/>
</dbReference>
<dbReference type="SUPFAM" id="SSF52540">
    <property type="entry name" value="P-loop containing nucleoside triphosphate hydrolases"/>
    <property type="match status" value="1"/>
</dbReference>
<evidence type="ECO:0000255" key="1">
    <source>
        <dbReference type="HAMAP-Rule" id="MF_00185"/>
    </source>
</evidence>